<protein>
    <recommendedName>
        <fullName evidence="1">Protein RecA 1</fullName>
    </recommendedName>
    <alternativeName>
        <fullName evidence="1">Recombinase A 1</fullName>
    </alternativeName>
</protein>
<organism>
    <name type="scientific">Myxococcus xanthus</name>
    <dbReference type="NCBI Taxonomy" id="34"/>
    <lineage>
        <taxon>Bacteria</taxon>
        <taxon>Pseudomonadati</taxon>
        <taxon>Myxococcota</taxon>
        <taxon>Myxococcia</taxon>
        <taxon>Myxococcales</taxon>
        <taxon>Cystobacterineae</taxon>
        <taxon>Myxococcaceae</taxon>
        <taxon>Myxococcus</taxon>
    </lineage>
</organism>
<keyword id="KW-0067">ATP-binding</keyword>
<keyword id="KW-0963">Cytoplasm</keyword>
<keyword id="KW-0227">DNA damage</keyword>
<keyword id="KW-0233">DNA recombination</keyword>
<keyword id="KW-0234">DNA repair</keyword>
<keyword id="KW-0238">DNA-binding</keyword>
<keyword id="KW-0547">Nucleotide-binding</keyword>
<keyword id="KW-0742">SOS response</keyword>
<name>RECA1_MYXXA</name>
<gene>
    <name evidence="1" type="primary">recA1</name>
</gene>
<sequence>MSKLAEKLKAVAAAVASIEKQFGRGSVMTLGGEAREQKVAVIPSGSVGVDRALGVGGYPRGRVVEVFGNESSGKTTLTLHAIAQVQAAGGVAAFIDAEHALDVSYARKLGVRVEELLVSQPDTGEQALEITEHLVRSGAVDLIVVDSVAALVPRAEIEGEMGDAHMGVQARLMSQALRKLTGAVSRSGTCIIFINQIRMKIGVMFGNPETTTGGNALKFYASVRMEIRRTGNIKDGDAVVGSKARVKVVKNKVAPPFQEAEFDLMYGSGIHRVGEVLDLGVATGLIEKSGSYFSLRGERIGQGRERAAEWLREHPDVLEALGKEITGTSALPSSPAPVEVAA</sequence>
<comment type="function">
    <text evidence="1">Can catalyze the hydrolysis of ATP in the presence of single-stranded DNA, the ATP-dependent uptake of single-stranded DNA by duplex DNA, and the ATP-dependent hybridization of homologous single-stranded DNAs. It interacts with LexA causing its activation and leading to its autocatalytic cleavage.</text>
</comment>
<comment type="subcellular location">
    <subcellularLocation>
        <location evidence="1">Cytoplasm</location>
    </subcellularLocation>
</comment>
<comment type="miscellaneous">
    <text>There are two genes for RecA in M.xanthus; recA1 seems less functional than recA2.</text>
</comment>
<comment type="similarity">
    <text evidence="1">Belongs to the RecA family.</text>
</comment>
<feature type="chain" id="PRO_0000122768" description="Protein RecA 1">
    <location>
        <begin position="1"/>
        <end position="342"/>
    </location>
</feature>
<feature type="binding site" evidence="1">
    <location>
        <begin position="68"/>
        <end position="75"/>
    </location>
    <ligand>
        <name>ATP</name>
        <dbReference type="ChEBI" id="CHEBI:30616"/>
    </ligand>
</feature>
<dbReference type="EMBL" id="L40367">
    <property type="protein sequence ID" value="AAC37000.1"/>
    <property type="molecule type" value="Genomic_DNA"/>
</dbReference>
<dbReference type="PIR" id="A57364">
    <property type="entry name" value="A57364"/>
</dbReference>
<dbReference type="SMR" id="P48291"/>
<dbReference type="OMA" id="VCQPETG"/>
<dbReference type="GO" id="GO:0005829">
    <property type="term" value="C:cytosol"/>
    <property type="evidence" value="ECO:0007669"/>
    <property type="project" value="TreeGrafter"/>
</dbReference>
<dbReference type="GO" id="GO:0005524">
    <property type="term" value="F:ATP binding"/>
    <property type="evidence" value="ECO:0007669"/>
    <property type="project" value="UniProtKB-UniRule"/>
</dbReference>
<dbReference type="GO" id="GO:0016887">
    <property type="term" value="F:ATP hydrolysis activity"/>
    <property type="evidence" value="ECO:0007669"/>
    <property type="project" value="InterPro"/>
</dbReference>
<dbReference type="GO" id="GO:0140664">
    <property type="term" value="F:ATP-dependent DNA damage sensor activity"/>
    <property type="evidence" value="ECO:0007669"/>
    <property type="project" value="InterPro"/>
</dbReference>
<dbReference type="GO" id="GO:0003684">
    <property type="term" value="F:damaged DNA binding"/>
    <property type="evidence" value="ECO:0007669"/>
    <property type="project" value="UniProtKB-UniRule"/>
</dbReference>
<dbReference type="GO" id="GO:0003697">
    <property type="term" value="F:single-stranded DNA binding"/>
    <property type="evidence" value="ECO:0007669"/>
    <property type="project" value="UniProtKB-UniRule"/>
</dbReference>
<dbReference type="GO" id="GO:0006310">
    <property type="term" value="P:DNA recombination"/>
    <property type="evidence" value="ECO:0007669"/>
    <property type="project" value="UniProtKB-UniRule"/>
</dbReference>
<dbReference type="GO" id="GO:0006281">
    <property type="term" value="P:DNA repair"/>
    <property type="evidence" value="ECO:0007669"/>
    <property type="project" value="UniProtKB-UniRule"/>
</dbReference>
<dbReference type="GO" id="GO:0009432">
    <property type="term" value="P:SOS response"/>
    <property type="evidence" value="ECO:0007669"/>
    <property type="project" value="UniProtKB-UniRule"/>
</dbReference>
<dbReference type="CDD" id="cd00983">
    <property type="entry name" value="RecA"/>
    <property type="match status" value="1"/>
</dbReference>
<dbReference type="FunFam" id="3.40.50.300:FF:000087">
    <property type="entry name" value="Recombinase RecA"/>
    <property type="match status" value="1"/>
</dbReference>
<dbReference type="Gene3D" id="3.40.50.300">
    <property type="entry name" value="P-loop containing nucleotide triphosphate hydrolases"/>
    <property type="match status" value="1"/>
</dbReference>
<dbReference type="HAMAP" id="MF_00268">
    <property type="entry name" value="RecA"/>
    <property type="match status" value="1"/>
</dbReference>
<dbReference type="InterPro" id="IPR003593">
    <property type="entry name" value="AAA+_ATPase"/>
</dbReference>
<dbReference type="InterPro" id="IPR013765">
    <property type="entry name" value="DNA_recomb/repair_RecA"/>
</dbReference>
<dbReference type="InterPro" id="IPR020584">
    <property type="entry name" value="DNA_recomb/repair_RecA_CS"/>
</dbReference>
<dbReference type="InterPro" id="IPR027417">
    <property type="entry name" value="P-loop_NTPase"/>
</dbReference>
<dbReference type="InterPro" id="IPR049261">
    <property type="entry name" value="RecA-like_C"/>
</dbReference>
<dbReference type="InterPro" id="IPR049428">
    <property type="entry name" value="RecA-like_N"/>
</dbReference>
<dbReference type="InterPro" id="IPR020588">
    <property type="entry name" value="RecA_ATP-bd"/>
</dbReference>
<dbReference type="InterPro" id="IPR023400">
    <property type="entry name" value="RecA_C_sf"/>
</dbReference>
<dbReference type="InterPro" id="IPR020587">
    <property type="entry name" value="RecA_monomer-monomer_interface"/>
</dbReference>
<dbReference type="NCBIfam" id="TIGR02012">
    <property type="entry name" value="tigrfam_recA"/>
    <property type="match status" value="1"/>
</dbReference>
<dbReference type="PANTHER" id="PTHR45900:SF1">
    <property type="entry name" value="MITOCHONDRIAL DNA REPAIR PROTEIN RECA HOMOLOG-RELATED"/>
    <property type="match status" value="1"/>
</dbReference>
<dbReference type="PANTHER" id="PTHR45900">
    <property type="entry name" value="RECA"/>
    <property type="match status" value="1"/>
</dbReference>
<dbReference type="Pfam" id="PF00154">
    <property type="entry name" value="RecA"/>
    <property type="match status" value="1"/>
</dbReference>
<dbReference type="Pfam" id="PF21096">
    <property type="entry name" value="RecA_C"/>
    <property type="match status" value="1"/>
</dbReference>
<dbReference type="PRINTS" id="PR00142">
    <property type="entry name" value="RECA"/>
</dbReference>
<dbReference type="SMART" id="SM00382">
    <property type="entry name" value="AAA"/>
    <property type="match status" value="1"/>
</dbReference>
<dbReference type="SUPFAM" id="SSF52540">
    <property type="entry name" value="P-loop containing nucleoside triphosphate hydrolases"/>
    <property type="match status" value="1"/>
</dbReference>
<dbReference type="SUPFAM" id="SSF54752">
    <property type="entry name" value="RecA protein, C-terminal domain"/>
    <property type="match status" value="1"/>
</dbReference>
<dbReference type="PROSITE" id="PS00321">
    <property type="entry name" value="RECA_1"/>
    <property type="match status" value="1"/>
</dbReference>
<dbReference type="PROSITE" id="PS50162">
    <property type="entry name" value="RECA_2"/>
    <property type="match status" value="1"/>
</dbReference>
<dbReference type="PROSITE" id="PS50163">
    <property type="entry name" value="RECA_3"/>
    <property type="match status" value="1"/>
</dbReference>
<accession>P48291</accession>
<evidence type="ECO:0000255" key="1">
    <source>
        <dbReference type="HAMAP-Rule" id="MF_00268"/>
    </source>
</evidence>
<reference key="1">
    <citation type="journal article" date="1995" name="J. Bacteriol.">
        <title>Two recA genes in Myxococcus xanthus.</title>
        <authorList>
            <person name="Norioka N."/>
            <person name="Hsu M.-Y."/>
            <person name="Inouye S."/>
            <person name="Inouye M."/>
        </authorList>
    </citation>
    <scope>NUCLEOTIDE SEQUENCE [GENOMIC DNA]</scope>
</reference>
<proteinExistence type="inferred from homology"/>